<name>TNNC3_BLAGE</name>
<organism evidence="5">
    <name type="scientific">Blattella germanica</name>
    <name type="common">German cockroach</name>
    <name type="synonym">Blatta germanica</name>
    <dbReference type="NCBI Taxonomy" id="6973"/>
    <lineage>
        <taxon>Eukaryota</taxon>
        <taxon>Metazoa</taxon>
        <taxon>Ecdysozoa</taxon>
        <taxon>Arthropoda</taxon>
        <taxon>Hexapoda</taxon>
        <taxon>Insecta</taxon>
        <taxon>Pterygota</taxon>
        <taxon>Neoptera</taxon>
        <taxon>Polyneoptera</taxon>
        <taxon>Dictyoptera</taxon>
        <taxon>Blattodea</taxon>
        <taxon>Blaberoidea</taxon>
        <taxon>Blattellidae</taxon>
        <taxon>Blattella</taxon>
    </lineage>
</organism>
<dbReference type="EMBL" id="DQ279094">
    <property type="protein sequence ID" value="ABB89298.1"/>
    <property type="molecule type" value="mRNA"/>
</dbReference>
<dbReference type="SMR" id="Q1A7B1"/>
<dbReference type="Allergome" id="145">
    <property type="allergen name" value="Bla g 6"/>
</dbReference>
<dbReference type="Allergome" id="2867">
    <property type="allergen name" value="Bla g 6.0301"/>
</dbReference>
<dbReference type="GO" id="GO:0016460">
    <property type="term" value="C:myosin II complex"/>
    <property type="evidence" value="ECO:0007669"/>
    <property type="project" value="TreeGrafter"/>
</dbReference>
<dbReference type="GO" id="GO:0005509">
    <property type="term" value="F:calcium ion binding"/>
    <property type="evidence" value="ECO:0007669"/>
    <property type="project" value="InterPro"/>
</dbReference>
<dbReference type="CDD" id="cd00051">
    <property type="entry name" value="EFh"/>
    <property type="match status" value="1"/>
</dbReference>
<dbReference type="FunFam" id="1.10.238.10:FF:000177">
    <property type="entry name" value="Troponin C Ia"/>
    <property type="match status" value="1"/>
</dbReference>
<dbReference type="FunFam" id="1.10.238.10:FF:000103">
    <property type="entry name" value="Troponin C Ib"/>
    <property type="match status" value="1"/>
</dbReference>
<dbReference type="Gene3D" id="1.10.238.10">
    <property type="entry name" value="EF-hand"/>
    <property type="match status" value="2"/>
</dbReference>
<dbReference type="InterPro" id="IPR050230">
    <property type="entry name" value="CALM/Myosin/TropC-like"/>
</dbReference>
<dbReference type="InterPro" id="IPR011992">
    <property type="entry name" value="EF-hand-dom_pair"/>
</dbReference>
<dbReference type="InterPro" id="IPR018247">
    <property type="entry name" value="EF_Hand_1_Ca_BS"/>
</dbReference>
<dbReference type="InterPro" id="IPR002048">
    <property type="entry name" value="EF_hand_dom"/>
</dbReference>
<dbReference type="PANTHER" id="PTHR23048:SF0">
    <property type="entry name" value="CALMODULIN LIKE 3"/>
    <property type="match status" value="1"/>
</dbReference>
<dbReference type="PANTHER" id="PTHR23048">
    <property type="entry name" value="MYOSIN LIGHT CHAIN 1, 3"/>
    <property type="match status" value="1"/>
</dbReference>
<dbReference type="Pfam" id="PF13499">
    <property type="entry name" value="EF-hand_7"/>
    <property type="match status" value="2"/>
</dbReference>
<dbReference type="SMART" id="SM00054">
    <property type="entry name" value="EFh"/>
    <property type="match status" value="4"/>
</dbReference>
<dbReference type="SUPFAM" id="SSF47473">
    <property type="entry name" value="EF-hand"/>
    <property type="match status" value="1"/>
</dbReference>
<dbReference type="PROSITE" id="PS00018">
    <property type="entry name" value="EF_HAND_1"/>
    <property type="match status" value="2"/>
</dbReference>
<dbReference type="PROSITE" id="PS50222">
    <property type="entry name" value="EF_HAND_2"/>
    <property type="match status" value="4"/>
</dbReference>
<proteinExistence type="evidence at protein level"/>
<evidence type="ECO:0000255" key="1">
    <source>
        <dbReference type="PROSITE-ProRule" id="PRU00448"/>
    </source>
</evidence>
<evidence type="ECO:0000269" key="2">
    <source>
    </source>
</evidence>
<evidence type="ECO:0000303" key="3">
    <source>
    </source>
</evidence>
<evidence type="ECO:0000305" key="4"/>
<evidence type="ECO:0000312" key="5">
    <source>
        <dbReference type="EMBL" id="ABB89298.1"/>
    </source>
</evidence>
<protein>
    <recommendedName>
        <fullName evidence="3">Troponin C, isoallergen Bla g 6.0301</fullName>
    </recommendedName>
    <allergenName evidence="3">Bla g 6.0301</allergenName>
</protein>
<accession>Q1A7B1</accession>
<feature type="chain" id="PRO_0000447468" description="Troponin C, isoallergen Bla g 6.0301">
    <location>
        <begin position="1"/>
        <end position="154"/>
    </location>
</feature>
<feature type="domain" description="EF-hand 1" evidence="1">
    <location>
        <begin position="11"/>
        <end position="46"/>
    </location>
</feature>
<feature type="domain" description="EF-hand 2" evidence="1">
    <location>
        <begin position="47"/>
        <end position="82"/>
    </location>
</feature>
<feature type="domain" description="EF-hand 3" evidence="1">
    <location>
        <begin position="87"/>
        <end position="122"/>
    </location>
</feature>
<feature type="domain" description="EF-hand 4" evidence="1">
    <location>
        <begin position="123"/>
        <end position="154"/>
    </location>
</feature>
<feature type="binding site" evidence="1">
    <location>
        <position position="60"/>
    </location>
    <ligand>
        <name>Ca(2+)</name>
        <dbReference type="ChEBI" id="CHEBI:29108"/>
        <label>1</label>
    </ligand>
</feature>
<feature type="binding site" evidence="1">
    <location>
        <position position="62"/>
    </location>
    <ligand>
        <name>Ca(2+)</name>
        <dbReference type="ChEBI" id="CHEBI:29108"/>
        <label>1</label>
    </ligand>
</feature>
<feature type="binding site" evidence="1">
    <location>
        <position position="64"/>
    </location>
    <ligand>
        <name>Ca(2+)</name>
        <dbReference type="ChEBI" id="CHEBI:29108"/>
        <label>1</label>
    </ligand>
</feature>
<feature type="binding site" evidence="1">
    <location>
        <position position="66"/>
    </location>
    <ligand>
        <name>Ca(2+)</name>
        <dbReference type="ChEBI" id="CHEBI:29108"/>
        <label>1</label>
    </ligand>
</feature>
<feature type="binding site" evidence="1">
    <location>
        <position position="71"/>
    </location>
    <ligand>
        <name>Ca(2+)</name>
        <dbReference type="ChEBI" id="CHEBI:29108"/>
        <label>1</label>
    </ligand>
</feature>
<feature type="binding site" evidence="1">
    <location>
        <position position="136"/>
    </location>
    <ligand>
        <name>Ca(2+)</name>
        <dbReference type="ChEBI" id="CHEBI:29108"/>
        <label>2</label>
    </ligand>
</feature>
<feature type="binding site" evidence="1">
    <location>
        <position position="138"/>
    </location>
    <ligand>
        <name>Ca(2+)</name>
        <dbReference type="ChEBI" id="CHEBI:29108"/>
        <label>2</label>
    </ligand>
</feature>
<feature type="binding site" evidence="1">
    <location>
        <position position="140"/>
    </location>
    <ligand>
        <name>Ca(2+)</name>
        <dbReference type="ChEBI" id="CHEBI:29108"/>
        <label>2</label>
    </ligand>
</feature>
<feature type="binding site" evidence="1">
    <location>
        <position position="142"/>
    </location>
    <ligand>
        <name>Ca(2+)</name>
        <dbReference type="ChEBI" id="CHEBI:29108"/>
        <label>2</label>
    </ligand>
</feature>
<feature type="binding site" evidence="1">
    <location>
        <position position="147"/>
    </location>
    <ligand>
        <name>Ca(2+)</name>
        <dbReference type="ChEBI" id="CHEBI:29108"/>
        <label>2</label>
    </ligand>
</feature>
<comment type="function">
    <text evidence="4">Troponin is the central regulatory protein of striated muscle contraction. It consists of three components: Troponin-I (Tn-I) which is the inhibitor of actomyosin ATPase, Troponin-T (Tn-T) which contains the binding site for tropomyosin and Troponin-C (Tn-C). The binding of calcium to Tn-C abolishes the inhibitory action of Tn on actin filaments.</text>
</comment>
<comment type="allergen">
    <text evidence="2">Causes an allergic reaction in human. Binds to IgE in 14% of the 104 patients tested allergic to cockroach. Calcium depletion by 10 mM ethylene glycol bis(2-aminoethyl)tetraacetic acid (EGTA) does not significantly affect IgE-binding, but addition of 10 mM CaCl(2) after calcium depletion increases IgE-binding by approximately 2-fold.</text>
</comment>
<comment type="similarity">
    <text evidence="4">Belongs to the troponin C family.</text>
</comment>
<keyword id="KW-0020">Allergen</keyword>
<keyword id="KW-0106">Calcium</keyword>
<keyword id="KW-0479">Metal-binding</keyword>
<keyword id="KW-0514">Muscle protein</keyword>
<keyword id="KW-0677">Repeat</keyword>
<reference evidence="5" key="1">
    <citation type="journal article" date="2006" name="J. Allergy Clin. Immunol.">
        <title>Bla g 6: a troponin C allergen from Blattella germanica with IgE binding calcium dependence.</title>
        <authorList>
            <person name="Hindley J."/>
            <person name="Wunschmann S."/>
            <person name="Satinover S.M."/>
            <person name="Woodfolk J.A."/>
            <person name="Chew F.T."/>
            <person name="Chapman M.D."/>
            <person name="Pomes A."/>
        </authorList>
    </citation>
    <scope>NUCLEOTIDE SEQUENCE [MRNA]</scope>
    <scope>3D-STRUCTURE MODELING</scope>
    <scope>ALLERGEN</scope>
</reference>
<sequence>MADEQLQLPPEQISVLRKAFDAFDREKSGSISTNMVEEILRLMGQPFNRRTLEELIDEVDADKSGRLEFDEFVTLAAKFIIEEDSEAMEKELREAFRLYDKEGNGYIPTSCLREILRELDEQLTSDELDMMIEEIDADGSGTVDFDEFMEMMTG</sequence>